<organism>
    <name type="scientific">Mus musculus</name>
    <name type="common">Mouse</name>
    <dbReference type="NCBI Taxonomy" id="10090"/>
    <lineage>
        <taxon>Eukaryota</taxon>
        <taxon>Metazoa</taxon>
        <taxon>Chordata</taxon>
        <taxon>Craniata</taxon>
        <taxon>Vertebrata</taxon>
        <taxon>Euteleostomi</taxon>
        <taxon>Mammalia</taxon>
        <taxon>Eutheria</taxon>
        <taxon>Euarchontoglires</taxon>
        <taxon>Glires</taxon>
        <taxon>Rodentia</taxon>
        <taxon>Myomorpha</taxon>
        <taxon>Muroidea</taxon>
        <taxon>Muridae</taxon>
        <taxon>Murinae</taxon>
        <taxon>Mus</taxon>
        <taxon>Mus</taxon>
    </lineage>
</organism>
<sequence>MPRVYIGRLSYQARERDVERFFKGYGKILEVDLKNGYGFVEFDDLRDADDAVYELNGKDLCGERVIVEHARGPRRDGSYGSGRSGYGYRRSGRDKYGPPTRTEYRLIVENLSSRCSWQDLKDYMRQAGEVTYADAHKGRKNEGVIEFVSYSDMKRALEKLDGTEVNGRKIRLVEDKPGSRRRRSYSRSRSHSRSRSRSRHSRKSRSRSGSSKSSHSKSRSRSRSGSHSRSKSRSRSQSRSRSKKEKSRSPSKDNKSRSRSRSPDKSRSKSKDHAEDKLQNNDSAGKAKSHSPSRHDSKSRSRSQERRAEEERRRSVSRARSQEKSRSQEKSLLKSRSRSRSRSRSRSKDKRKGRKRSRDESRSRSRSKSERSRKHSSKRDSKVSSSSSSSKKKKDTDHSRSPSRSVSKEREHAKAESGQRGSRAEGESEAPNPEPRARSRSTSKSKPNVPAESRSRSKSASKTRSRSKSPSRSASRSPSRSRSRSHSRS</sequence>
<reference key="1">
    <citation type="journal article" date="2004" name="Genome Res.">
        <title>The status, quality, and expansion of the NIH full-length cDNA project: the Mammalian Gene Collection (MGC).</title>
        <authorList>
            <consortium name="The MGC Project Team"/>
        </authorList>
    </citation>
    <scope>NUCLEOTIDE SEQUENCE [LARGE SCALE MRNA]</scope>
</reference>
<reference key="2">
    <citation type="submission" date="2000-04" db="EMBL/GenBank/DDBJ databases">
        <title>Isolation of full-length cDNA clones from mouse brain cDNA library made by oligo-capping method.</title>
        <authorList>
            <person name="Osada N."/>
            <person name="Kusuda J."/>
            <person name="Tanuma R."/>
            <person name="Ito A."/>
            <person name="Hirata M."/>
            <person name="Sugano S."/>
            <person name="Hashimoto K."/>
        </authorList>
    </citation>
    <scope>NUCLEOTIDE SEQUENCE [LARGE SCALE MRNA] OF 147-489</scope>
    <source>
        <strain>C57BL/6J</strain>
        <tissue>Brain</tissue>
    </source>
</reference>
<accession>Q8VE97</accession>
<accession>Q9JJC3</accession>
<evidence type="ECO:0000250" key="1"/>
<evidence type="ECO:0000250" key="2">
    <source>
        <dbReference type="UniProtKB" id="Q08170"/>
    </source>
</evidence>
<evidence type="ECO:0000255" key="3">
    <source>
        <dbReference type="PROSITE-ProRule" id="PRU00176"/>
    </source>
</evidence>
<evidence type="ECO:0000256" key="4">
    <source>
        <dbReference type="SAM" id="MobiDB-lite"/>
    </source>
</evidence>
<evidence type="ECO:0000305" key="5"/>
<dbReference type="EMBL" id="BC019437">
    <property type="protein sequence ID" value="AAH19437.1"/>
    <property type="molecule type" value="mRNA"/>
</dbReference>
<dbReference type="EMBL" id="AB041587">
    <property type="protein sequence ID" value="BAA95070.1"/>
    <property type="status" value="ALT_INIT"/>
    <property type="molecule type" value="mRNA"/>
</dbReference>
<dbReference type="SMR" id="Q8VE97"/>
<dbReference type="FunCoup" id="Q8VE97">
    <property type="interactions" value="245"/>
</dbReference>
<dbReference type="IntAct" id="Q8VE97">
    <property type="interactions" value="2"/>
</dbReference>
<dbReference type="STRING" id="10090.ENSMUSP00000061474"/>
<dbReference type="GlyGen" id="Q8VE97">
    <property type="glycosylation" value="1 site, 1 N-linked glycan (1 site)"/>
</dbReference>
<dbReference type="iPTMnet" id="Q8VE97"/>
<dbReference type="PhosphoSitePlus" id="Q8VE97"/>
<dbReference type="jPOST" id="Q8VE97"/>
<dbReference type="PaxDb" id="10090-ENSMUSP00000061474"/>
<dbReference type="PeptideAtlas" id="Q8VE97"/>
<dbReference type="ProteomicsDB" id="257072"/>
<dbReference type="Pumba" id="Q8VE97"/>
<dbReference type="AGR" id="MGI:1890577"/>
<dbReference type="MGI" id="MGI:1890577">
    <property type="gene designation" value="Srsf4"/>
</dbReference>
<dbReference type="eggNOG" id="KOG0106">
    <property type="taxonomic scope" value="Eukaryota"/>
</dbReference>
<dbReference type="InParanoid" id="Q8VE97"/>
<dbReference type="ChiTaRS" id="Srsf4">
    <property type="organism name" value="mouse"/>
</dbReference>
<dbReference type="PRO" id="PR:Q8VE97"/>
<dbReference type="Proteomes" id="UP000000589">
    <property type="component" value="Unplaced"/>
</dbReference>
<dbReference type="RNAct" id="Q8VE97">
    <property type="molecule type" value="protein"/>
</dbReference>
<dbReference type="GO" id="GO:0016607">
    <property type="term" value="C:nuclear speck"/>
    <property type="evidence" value="ECO:0007669"/>
    <property type="project" value="UniProtKB-SubCell"/>
</dbReference>
<dbReference type="GO" id="GO:0003723">
    <property type="term" value="F:RNA binding"/>
    <property type="evidence" value="ECO:0007669"/>
    <property type="project" value="UniProtKB-KW"/>
</dbReference>
<dbReference type="GO" id="GO:0002244">
    <property type="term" value="P:hematopoietic progenitor cell differentiation"/>
    <property type="evidence" value="ECO:0000315"/>
    <property type="project" value="MGI"/>
</dbReference>
<dbReference type="GO" id="GO:0006397">
    <property type="term" value="P:mRNA processing"/>
    <property type="evidence" value="ECO:0007669"/>
    <property type="project" value="UniProtKB-KW"/>
</dbReference>
<dbReference type="GO" id="GO:0048025">
    <property type="term" value="P:negative regulation of mRNA splicing, via spliceosome"/>
    <property type="evidence" value="ECO:0000250"/>
    <property type="project" value="UniProtKB"/>
</dbReference>
<dbReference type="GO" id="GO:0008380">
    <property type="term" value="P:RNA splicing"/>
    <property type="evidence" value="ECO:0007669"/>
    <property type="project" value="UniProtKB-KW"/>
</dbReference>
<dbReference type="CDD" id="cd12337">
    <property type="entry name" value="RRM1_SRSF4_like"/>
    <property type="match status" value="1"/>
</dbReference>
<dbReference type="CDD" id="cd12600">
    <property type="entry name" value="RRM2_SRSF4_like"/>
    <property type="match status" value="1"/>
</dbReference>
<dbReference type="FunFam" id="3.30.70.330:FF:000028">
    <property type="entry name" value="Putative serine/arginine-rich splicing factor 4"/>
    <property type="match status" value="1"/>
</dbReference>
<dbReference type="FunFam" id="3.30.70.330:FF:000190">
    <property type="entry name" value="serine/arginine-rich splicing factor 4 isoform X1"/>
    <property type="match status" value="1"/>
</dbReference>
<dbReference type="Gene3D" id="3.30.70.330">
    <property type="match status" value="2"/>
</dbReference>
<dbReference type="InterPro" id="IPR012677">
    <property type="entry name" value="Nucleotide-bd_a/b_plait_sf"/>
</dbReference>
<dbReference type="InterPro" id="IPR035979">
    <property type="entry name" value="RBD_domain_sf"/>
</dbReference>
<dbReference type="InterPro" id="IPR047190">
    <property type="entry name" value="RRM2_SRSF4/6"/>
</dbReference>
<dbReference type="InterPro" id="IPR000504">
    <property type="entry name" value="RRM_dom"/>
</dbReference>
<dbReference type="InterPro" id="IPR050374">
    <property type="entry name" value="RRT5_SRSF_SR"/>
</dbReference>
<dbReference type="PANTHER" id="PTHR23003">
    <property type="entry name" value="RNA RECOGNITION MOTIF RRM DOMAIN CONTAINING PROTEIN"/>
    <property type="match status" value="1"/>
</dbReference>
<dbReference type="PANTHER" id="PTHR23003:SF45">
    <property type="entry name" value="SERINE_ARGININE-RICH SPLICING FACTOR 4"/>
    <property type="match status" value="1"/>
</dbReference>
<dbReference type="Pfam" id="PF00076">
    <property type="entry name" value="RRM_1"/>
    <property type="match status" value="2"/>
</dbReference>
<dbReference type="SMART" id="SM00360">
    <property type="entry name" value="RRM"/>
    <property type="match status" value="2"/>
</dbReference>
<dbReference type="SUPFAM" id="SSF54928">
    <property type="entry name" value="RNA-binding domain, RBD"/>
    <property type="match status" value="1"/>
</dbReference>
<dbReference type="PROSITE" id="PS50102">
    <property type="entry name" value="RRM"/>
    <property type="match status" value="2"/>
</dbReference>
<name>SRSF4_MOUSE</name>
<keyword id="KW-0507">mRNA processing</keyword>
<keyword id="KW-0508">mRNA splicing</keyword>
<keyword id="KW-0539">Nucleus</keyword>
<keyword id="KW-0597">Phosphoprotein</keyword>
<keyword id="KW-1185">Reference proteome</keyword>
<keyword id="KW-0677">Repeat</keyword>
<keyword id="KW-0678">Repressor</keyword>
<keyword id="KW-0694">RNA-binding</keyword>
<protein>
    <recommendedName>
        <fullName>Serine/arginine-rich splicing factor 4</fullName>
    </recommendedName>
    <alternativeName>
        <fullName>Splicing factor, arginine/serine-rich 4</fullName>
    </alternativeName>
</protein>
<proteinExistence type="evidence at transcript level"/>
<gene>
    <name type="primary">Srsf4</name>
    <name type="synonym">Sfrs4</name>
    <name type="ORF">MNCb-2616</name>
</gene>
<comment type="function">
    <text evidence="1">Plays a role in alternative splice site selection during pre-mRNA splicing. Represses the splicing of MAPT/Tau exon 10 (By similarity).</text>
</comment>
<comment type="subunit">
    <text evidence="1">Found in a pre-mRNA splicing complex with SRSF4/SFRS4, SRSF5/SFRS5, SNRNP70, SNRPA1, SRRM1 and SRRM2. Interacts with PNN (By similarity).</text>
</comment>
<comment type="subcellular location">
    <subcellularLocation>
        <location evidence="1">Nucleus speckle</location>
    </subcellularLocation>
</comment>
<comment type="PTM">
    <text evidence="1">Extensively phosphorylated on serine residues in the RS domain.</text>
</comment>
<comment type="similarity">
    <text evidence="5">Belongs to the splicing factor SR family.</text>
</comment>
<comment type="sequence caution" evidence="5">
    <conflict type="erroneous initiation">
        <sequence resource="EMBL-CDS" id="BAA95070"/>
    </conflict>
</comment>
<feature type="chain" id="PRO_0000081926" description="Serine/arginine-rich splicing factor 4">
    <location>
        <begin position="1"/>
        <end position="489"/>
    </location>
</feature>
<feature type="domain" description="RRM 1" evidence="3">
    <location>
        <begin position="2"/>
        <end position="72"/>
    </location>
</feature>
<feature type="domain" description="RRM 2" evidence="3">
    <location>
        <begin position="104"/>
        <end position="177"/>
    </location>
</feature>
<feature type="region of interest" description="Disordered" evidence="4">
    <location>
        <begin position="72"/>
        <end position="95"/>
    </location>
</feature>
<feature type="region of interest" description="Disordered" evidence="4">
    <location>
        <begin position="169"/>
        <end position="489"/>
    </location>
</feature>
<feature type="compositionally biased region" description="Basic residues" evidence="4">
    <location>
        <begin position="179"/>
        <end position="206"/>
    </location>
</feature>
<feature type="compositionally biased region" description="Basic residues" evidence="4">
    <location>
        <begin position="214"/>
        <end position="246"/>
    </location>
</feature>
<feature type="compositionally biased region" description="Basic and acidic residues" evidence="4">
    <location>
        <begin position="247"/>
        <end position="279"/>
    </location>
</feature>
<feature type="compositionally biased region" description="Basic and acidic residues" evidence="4">
    <location>
        <begin position="293"/>
        <end position="332"/>
    </location>
</feature>
<feature type="compositionally biased region" description="Basic residues" evidence="4">
    <location>
        <begin position="333"/>
        <end position="356"/>
    </location>
</feature>
<feature type="compositionally biased region" description="Basic and acidic residues" evidence="4">
    <location>
        <begin position="357"/>
        <end position="370"/>
    </location>
</feature>
<feature type="compositionally biased region" description="Basic and acidic residues" evidence="4">
    <location>
        <begin position="394"/>
        <end position="426"/>
    </location>
</feature>
<feature type="compositionally biased region" description="Basic residues" evidence="4">
    <location>
        <begin position="456"/>
        <end position="469"/>
    </location>
</feature>
<feature type="compositionally biased region" description="Basic residues" evidence="4">
    <location>
        <begin position="479"/>
        <end position="489"/>
    </location>
</feature>
<feature type="modified residue" description="Phosphoserine" evidence="2">
    <location>
        <position position="78"/>
    </location>
</feature>
<feature type="modified residue" description="Phosphoserine" evidence="2">
    <location>
        <position position="84"/>
    </location>
</feature>
<feature type="modified residue" description="Phosphoserine" evidence="2">
    <location>
        <position position="289"/>
    </location>
</feature>
<feature type="modified residue" description="Phosphoserine" evidence="2">
    <location>
        <position position="291"/>
    </location>
</feature>
<feature type="modified residue" description="Phosphoserine" evidence="2">
    <location>
        <position position="293"/>
    </location>
</feature>
<feature type="modified residue" description="Phosphoserine" evidence="2">
    <location>
        <position position="441"/>
    </location>
</feature>
<feature type="modified residue" description="Phosphoserine" evidence="2">
    <location>
        <position position="453"/>
    </location>
</feature>
<feature type="modified residue" description="Phosphoserine" evidence="2">
    <location>
        <position position="455"/>
    </location>
</feature>
<feature type="sequence conflict" description="In Ref. 2." evidence="5" ref="2">
    <original>S</original>
    <variation>SKVGS</variation>
    <location>
        <position position="341"/>
    </location>
</feature>
<feature type="sequence conflict" description="In Ref. 2." evidence="5" ref="2">
    <location>
        <begin position="389"/>
        <end position="390"/>
    </location>
</feature>
<feature type="sequence conflict" description="In Ref. 2; BAA95070." evidence="5" ref="2">
    <original>G</original>
    <variation>E</variation>
    <location>
        <position position="421"/>
    </location>
</feature>